<proteinExistence type="evidence at protein level"/>
<accession>Q26061</accession>
<protein>
    <recommendedName>
        <fullName>Ferritin</fullName>
        <ecNumber>1.16.3.1</ecNumber>
    </recommendedName>
</protein>
<organism>
    <name type="scientific">Pacifastacus leniusculus</name>
    <name type="common">Signal crayfish</name>
    <dbReference type="NCBI Taxonomy" id="6720"/>
    <lineage>
        <taxon>Eukaryota</taxon>
        <taxon>Metazoa</taxon>
        <taxon>Ecdysozoa</taxon>
        <taxon>Arthropoda</taxon>
        <taxon>Crustacea</taxon>
        <taxon>Multicrustacea</taxon>
        <taxon>Malacostraca</taxon>
        <taxon>Eumalacostraca</taxon>
        <taxon>Eucarida</taxon>
        <taxon>Decapoda</taxon>
        <taxon>Pleocyemata</taxon>
        <taxon>Astacidea</taxon>
        <taxon>Astacoidea</taxon>
        <taxon>Astacidae</taxon>
        <taxon>Pacifastacus</taxon>
    </lineage>
</organism>
<feature type="chain" id="PRO_0000201071" description="Ferritin">
    <location>
        <begin position="1"/>
        <end position="181"/>
    </location>
</feature>
<feature type="domain" description="Ferritin-like diiron" evidence="2">
    <location>
        <begin position="6"/>
        <end position="155"/>
    </location>
</feature>
<feature type="binding site" evidence="2">
    <location>
        <position position="23"/>
    </location>
    <ligand>
        <name>Fe cation</name>
        <dbReference type="ChEBI" id="CHEBI:24875"/>
        <label>1</label>
    </ligand>
</feature>
<feature type="binding site" evidence="2">
    <location>
        <position position="58"/>
    </location>
    <ligand>
        <name>Fe cation</name>
        <dbReference type="ChEBI" id="CHEBI:24875"/>
        <label>1</label>
    </ligand>
</feature>
<feature type="binding site" evidence="2">
    <location>
        <position position="58"/>
    </location>
    <ligand>
        <name>Fe cation</name>
        <dbReference type="ChEBI" id="CHEBI:24875"/>
        <label>2</label>
    </ligand>
</feature>
<feature type="binding site" evidence="2">
    <location>
        <position position="61"/>
    </location>
    <ligand>
        <name>Fe cation</name>
        <dbReference type="ChEBI" id="CHEBI:24875"/>
        <label>1</label>
    </ligand>
</feature>
<feature type="binding site" evidence="2">
    <location>
        <position position="103"/>
    </location>
    <ligand>
        <name>Fe cation</name>
        <dbReference type="ChEBI" id="CHEBI:24875"/>
        <label>2</label>
    </ligand>
</feature>
<feature type="binding site" evidence="2">
    <location>
        <position position="137"/>
    </location>
    <ligand>
        <name>Fe cation</name>
        <dbReference type="ChEBI" id="CHEBI:24875"/>
        <label>2</label>
    </ligand>
</feature>
<dbReference type="EC" id="1.16.3.1"/>
<dbReference type="EMBL" id="X90566">
    <property type="protein sequence ID" value="CAA62186.1"/>
    <property type="molecule type" value="mRNA"/>
</dbReference>
<dbReference type="PIR" id="S62651">
    <property type="entry name" value="S62651"/>
</dbReference>
<dbReference type="SMR" id="Q26061"/>
<dbReference type="GO" id="GO:0005737">
    <property type="term" value="C:cytoplasm"/>
    <property type="evidence" value="ECO:0007669"/>
    <property type="project" value="UniProtKB-SubCell"/>
</dbReference>
<dbReference type="GO" id="GO:0008199">
    <property type="term" value="F:ferric iron binding"/>
    <property type="evidence" value="ECO:0007669"/>
    <property type="project" value="InterPro"/>
</dbReference>
<dbReference type="GO" id="GO:0008198">
    <property type="term" value="F:ferrous iron binding"/>
    <property type="evidence" value="ECO:0007669"/>
    <property type="project" value="TreeGrafter"/>
</dbReference>
<dbReference type="GO" id="GO:0004322">
    <property type="term" value="F:ferroxidase activity"/>
    <property type="evidence" value="ECO:0007669"/>
    <property type="project" value="UniProtKB-EC"/>
</dbReference>
<dbReference type="GO" id="GO:0006879">
    <property type="term" value="P:intracellular iron ion homeostasis"/>
    <property type="evidence" value="ECO:0007669"/>
    <property type="project" value="UniProtKB-KW"/>
</dbReference>
<dbReference type="GO" id="GO:0006826">
    <property type="term" value="P:iron ion transport"/>
    <property type="evidence" value="ECO:0007669"/>
    <property type="project" value="InterPro"/>
</dbReference>
<dbReference type="CDD" id="cd01056">
    <property type="entry name" value="Euk_Ferritin"/>
    <property type="match status" value="1"/>
</dbReference>
<dbReference type="FunFam" id="1.20.1260.10:FF:000002">
    <property type="entry name" value="Ferritin, mitochondrial"/>
    <property type="match status" value="1"/>
</dbReference>
<dbReference type="Gene3D" id="1.20.1260.10">
    <property type="match status" value="1"/>
</dbReference>
<dbReference type="InterPro" id="IPR001519">
    <property type="entry name" value="Ferritin"/>
</dbReference>
<dbReference type="InterPro" id="IPR012347">
    <property type="entry name" value="Ferritin-like"/>
</dbReference>
<dbReference type="InterPro" id="IPR009040">
    <property type="entry name" value="Ferritin-like_diiron"/>
</dbReference>
<dbReference type="InterPro" id="IPR009078">
    <property type="entry name" value="Ferritin-like_SF"/>
</dbReference>
<dbReference type="InterPro" id="IPR008331">
    <property type="entry name" value="Ferritin_DPS_dom"/>
</dbReference>
<dbReference type="PANTHER" id="PTHR11431">
    <property type="entry name" value="FERRITIN"/>
    <property type="match status" value="1"/>
</dbReference>
<dbReference type="PANTHER" id="PTHR11431:SF75">
    <property type="entry name" value="FERRITIN"/>
    <property type="match status" value="1"/>
</dbReference>
<dbReference type="Pfam" id="PF00210">
    <property type="entry name" value="Ferritin"/>
    <property type="match status" value="1"/>
</dbReference>
<dbReference type="SUPFAM" id="SSF47240">
    <property type="entry name" value="Ferritin-like"/>
    <property type="match status" value="1"/>
</dbReference>
<dbReference type="PROSITE" id="PS50905">
    <property type="entry name" value="FERRITIN_LIKE"/>
    <property type="match status" value="1"/>
</dbReference>
<name>FRI_PACLE</name>
<sequence length="181" mass="20671">MASQIRHNYHEDCEPINKQINLEFYASYVYMSMGHYFDRDDISLPGASKFFKDSSDEEREHGQKLMKYQNKRGARIVLQAIAAPSLQEWGNLHDALQAALDLENEVNQSLLDLDATASKINDPHLTNMLEGEFLEEQVESIEKIGNLITRLKRAGTSGLGEFLFDKELKQRFLPSLTSHPN</sequence>
<comment type="function">
    <text evidence="1">Stores iron in a soluble, non-toxic, readily available form. Important for iron homeostasis. Has ferroxidase activity. Iron is taken up in the ferrous form and deposited as ferric hydroxides after oxidation (By similarity).</text>
</comment>
<comment type="catalytic activity">
    <reaction>
        <text>4 Fe(2+) + O2 + 4 H(+) = 4 Fe(3+) + 2 H2O</text>
        <dbReference type="Rhea" id="RHEA:11148"/>
        <dbReference type="ChEBI" id="CHEBI:15377"/>
        <dbReference type="ChEBI" id="CHEBI:15378"/>
        <dbReference type="ChEBI" id="CHEBI:15379"/>
        <dbReference type="ChEBI" id="CHEBI:29033"/>
        <dbReference type="ChEBI" id="CHEBI:29034"/>
        <dbReference type="EC" id="1.16.3.1"/>
    </reaction>
</comment>
<comment type="subunit">
    <text evidence="1">Oligomer of 12 or 24 subunits. The functional molecule is roughly spherical and contains a central cavity into which the polymeric mineral iron core is deposited (By similarity).</text>
</comment>
<comment type="subcellular location">
    <subcellularLocation>
        <location evidence="3">Cytoplasm</location>
    </subcellularLocation>
</comment>
<comment type="PTM">
    <text>The N-terminus is blocked.</text>
</comment>
<comment type="miscellaneous">
    <text>There are 2 types of crayfish ferritin subunit: a 19 kDa chain and a 20 kDa chain.</text>
</comment>
<comment type="similarity">
    <text evidence="3">Belongs to the ferritin family.</text>
</comment>
<reference key="1">
    <citation type="journal article" date="1996" name="Eur. J. Biochem.">
        <title>Purification and cDNA cloning of ferritin from the hepatopancreas of the freshwater crayfish Pacifastacus leniusculus.</title>
        <authorList>
            <person name="Huang T.-S."/>
            <person name="Law J.H."/>
            <person name="Soederhaell K."/>
        </authorList>
    </citation>
    <scope>NUCLEOTIDE SEQUENCE [MRNA]</scope>
    <scope>PROTEIN SEQUENCE OF 76-88</scope>
    <source>
        <tissue>Hepatopancreas</tissue>
    </source>
</reference>
<keyword id="KW-0963">Cytoplasm</keyword>
<keyword id="KW-0903">Direct protein sequencing</keyword>
<keyword id="KW-0408">Iron</keyword>
<keyword id="KW-0409">Iron storage</keyword>
<keyword id="KW-0479">Metal-binding</keyword>
<keyword id="KW-0560">Oxidoreductase</keyword>
<evidence type="ECO:0000250" key="1"/>
<evidence type="ECO:0000255" key="2">
    <source>
        <dbReference type="PROSITE-ProRule" id="PRU00085"/>
    </source>
</evidence>
<evidence type="ECO:0000305" key="3"/>